<name>PYRG_AERHH</name>
<dbReference type="EC" id="6.3.4.2" evidence="1"/>
<dbReference type="EMBL" id="CP000462">
    <property type="protein sequence ID" value="ABK37301.1"/>
    <property type="molecule type" value="Genomic_DNA"/>
</dbReference>
<dbReference type="RefSeq" id="WP_011704768.1">
    <property type="nucleotide sequence ID" value="NC_008570.1"/>
</dbReference>
<dbReference type="RefSeq" id="YP_855363.1">
    <property type="nucleotide sequence ID" value="NC_008570.1"/>
</dbReference>
<dbReference type="SMR" id="A0KGH2"/>
<dbReference type="STRING" id="380703.AHA_0820"/>
<dbReference type="EnsemblBacteria" id="ABK37301">
    <property type="protein sequence ID" value="ABK37301"/>
    <property type="gene ID" value="AHA_0820"/>
</dbReference>
<dbReference type="GeneID" id="4489300"/>
<dbReference type="KEGG" id="aha:AHA_0820"/>
<dbReference type="PATRIC" id="fig|380703.7.peg.820"/>
<dbReference type="eggNOG" id="COG0504">
    <property type="taxonomic scope" value="Bacteria"/>
</dbReference>
<dbReference type="HOGENOM" id="CLU_011675_5_0_6"/>
<dbReference type="OrthoDB" id="9801107at2"/>
<dbReference type="UniPathway" id="UPA00159">
    <property type="reaction ID" value="UER00277"/>
</dbReference>
<dbReference type="Proteomes" id="UP000000756">
    <property type="component" value="Chromosome"/>
</dbReference>
<dbReference type="GO" id="GO:0005829">
    <property type="term" value="C:cytosol"/>
    <property type="evidence" value="ECO:0007669"/>
    <property type="project" value="TreeGrafter"/>
</dbReference>
<dbReference type="GO" id="GO:0005524">
    <property type="term" value="F:ATP binding"/>
    <property type="evidence" value="ECO:0007669"/>
    <property type="project" value="UniProtKB-KW"/>
</dbReference>
<dbReference type="GO" id="GO:0003883">
    <property type="term" value="F:CTP synthase activity"/>
    <property type="evidence" value="ECO:0007669"/>
    <property type="project" value="UniProtKB-UniRule"/>
</dbReference>
<dbReference type="GO" id="GO:0004359">
    <property type="term" value="F:glutaminase activity"/>
    <property type="evidence" value="ECO:0007669"/>
    <property type="project" value="RHEA"/>
</dbReference>
<dbReference type="GO" id="GO:0042802">
    <property type="term" value="F:identical protein binding"/>
    <property type="evidence" value="ECO:0007669"/>
    <property type="project" value="TreeGrafter"/>
</dbReference>
<dbReference type="GO" id="GO:0046872">
    <property type="term" value="F:metal ion binding"/>
    <property type="evidence" value="ECO:0007669"/>
    <property type="project" value="UniProtKB-KW"/>
</dbReference>
<dbReference type="GO" id="GO:0044210">
    <property type="term" value="P:'de novo' CTP biosynthetic process"/>
    <property type="evidence" value="ECO:0007669"/>
    <property type="project" value="UniProtKB-UniRule"/>
</dbReference>
<dbReference type="GO" id="GO:0019856">
    <property type="term" value="P:pyrimidine nucleobase biosynthetic process"/>
    <property type="evidence" value="ECO:0007669"/>
    <property type="project" value="TreeGrafter"/>
</dbReference>
<dbReference type="CDD" id="cd03113">
    <property type="entry name" value="CTPS_N"/>
    <property type="match status" value="1"/>
</dbReference>
<dbReference type="CDD" id="cd01746">
    <property type="entry name" value="GATase1_CTP_Synthase"/>
    <property type="match status" value="1"/>
</dbReference>
<dbReference type="FunFam" id="3.40.50.300:FF:000009">
    <property type="entry name" value="CTP synthase"/>
    <property type="match status" value="1"/>
</dbReference>
<dbReference type="FunFam" id="3.40.50.880:FF:000002">
    <property type="entry name" value="CTP synthase"/>
    <property type="match status" value="1"/>
</dbReference>
<dbReference type="Gene3D" id="3.40.50.880">
    <property type="match status" value="1"/>
</dbReference>
<dbReference type="Gene3D" id="3.40.50.300">
    <property type="entry name" value="P-loop containing nucleotide triphosphate hydrolases"/>
    <property type="match status" value="1"/>
</dbReference>
<dbReference type="HAMAP" id="MF_01227">
    <property type="entry name" value="PyrG"/>
    <property type="match status" value="1"/>
</dbReference>
<dbReference type="InterPro" id="IPR029062">
    <property type="entry name" value="Class_I_gatase-like"/>
</dbReference>
<dbReference type="InterPro" id="IPR004468">
    <property type="entry name" value="CTP_synthase"/>
</dbReference>
<dbReference type="InterPro" id="IPR017456">
    <property type="entry name" value="CTP_synthase_N"/>
</dbReference>
<dbReference type="InterPro" id="IPR017926">
    <property type="entry name" value="GATASE"/>
</dbReference>
<dbReference type="InterPro" id="IPR033828">
    <property type="entry name" value="GATase1_CTP_Synthase"/>
</dbReference>
<dbReference type="InterPro" id="IPR027417">
    <property type="entry name" value="P-loop_NTPase"/>
</dbReference>
<dbReference type="NCBIfam" id="NF003792">
    <property type="entry name" value="PRK05380.1"/>
    <property type="match status" value="1"/>
</dbReference>
<dbReference type="NCBIfam" id="TIGR00337">
    <property type="entry name" value="PyrG"/>
    <property type="match status" value="1"/>
</dbReference>
<dbReference type="PANTHER" id="PTHR11550">
    <property type="entry name" value="CTP SYNTHASE"/>
    <property type="match status" value="1"/>
</dbReference>
<dbReference type="PANTHER" id="PTHR11550:SF0">
    <property type="entry name" value="CTP SYNTHASE-RELATED"/>
    <property type="match status" value="1"/>
</dbReference>
<dbReference type="Pfam" id="PF06418">
    <property type="entry name" value="CTP_synth_N"/>
    <property type="match status" value="1"/>
</dbReference>
<dbReference type="Pfam" id="PF00117">
    <property type="entry name" value="GATase"/>
    <property type="match status" value="1"/>
</dbReference>
<dbReference type="SUPFAM" id="SSF52317">
    <property type="entry name" value="Class I glutamine amidotransferase-like"/>
    <property type="match status" value="1"/>
</dbReference>
<dbReference type="SUPFAM" id="SSF52540">
    <property type="entry name" value="P-loop containing nucleoside triphosphate hydrolases"/>
    <property type="match status" value="1"/>
</dbReference>
<dbReference type="PROSITE" id="PS51273">
    <property type="entry name" value="GATASE_TYPE_1"/>
    <property type="match status" value="1"/>
</dbReference>
<proteinExistence type="inferred from homology"/>
<keyword id="KW-0067">ATP-binding</keyword>
<keyword id="KW-0315">Glutamine amidotransferase</keyword>
<keyword id="KW-0436">Ligase</keyword>
<keyword id="KW-0460">Magnesium</keyword>
<keyword id="KW-0479">Metal-binding</keyword>
<keyword id="KW-0547">Nucleotide-binding</keyword>
<keyword id="KW-0665">Pyrimidine biosynthesis</keyword>
<keyword id="KW-1185">Reference proteome</keyword>
<comment type="function">
    <text evidence="1">Catalyzes the ATP-dependent amination of UTP to CTP with either L-glutamine or ammonia as the source of nitrogen. Regulates intracellular CTP levels through interactions with the four ribonucleotide triphosphates.</text>
</comment>
<comment type="catalytic activity">
    <reaction evidence="1">
        <text>UTP + L-glutamine + ATP + H2O = CTP + L-glutamate + ADP + phosphate + 2 H(+)</text>
        <dbReference type="Rhea" id="RHEA:26426"/>
        <dbReference type="ChEBI" id="CHEBI:15377"/>
        <dbReference type="ChEBI" id="CHEBI:15378"/>
        <dbReference type="ChEBI" id="CHEBI:29985"/>
        <dbReference type="ChEBI" id="CHEBI:30616"/>
        <dbReference type="ChEBI" id="CHEBI:37563"/>
        <dbReference type="ChEBI" id="CHEBI:43474"/>
        <dbReference type="ChEBI" id="CHEBI:46398"/>
        <dbReference type="ChEBI" id="CHEBI:58359"/>
        <dbReference type="ChEBI" id="CHEBI:456216"/>
        <dbReference type="EC" id="6.3.4.2"/>
    </reaction>
</comment>
<comment type="catalytic activity">
    <reaction evidence="1">
        <text>L-glutamine + H2O = L-glutamate + NH4(+)</text>
        <dbReference type="Rhea" id="RHEA:15889"/>
        <dbReference type="ChEBI" id="CHEBI:15377"/>
        <dbReference type="ChEBI" id="CHEBI:28938"/>
        <dbReference type="ChEBI" id="CHEBI:29985"/>
        <dbReference type="ChEBI" id="CHEBI:58359"/>
    </reaction>
</comment>
<comment type="catalytic activity">
    <reaction evidence="1">
        <text>UTP + NH4(+) + ATP = CTP + ADP + phosphate + 2 H(+)</text>
        <dbReference type="Rhea" id="RHEA:16597"/>
        <dbReference type="ChEBI" id="CHEBI:15378"/>
        <dbReference type="ChEBI" id="CHEBI:28938"/>
        <dbReference type="ChEBI" id="CHEBI:30616"/>
        <dbReference type="ChEBI" id="CHEBI:37563"/>
        <dbReference type="ChEBI" id="CHEBI:43474"/>
        <dbReference type="ChEBI" id="CHEBI:46398"/>
        <dbReference type="ChEBI" id="CHEBI:456216"/>
    </reaction>
</comment>
<comment type="activity regulation">
    <text evidence="1">Allosterically activated by GTP, when glutamine is the substrate; GTP has no effect on the reaction when ammonia is the substrate. The allosteric effector GTP functions by stabilizing the protein conformation that binds the tetrahedral intermediate(s) formed during glutamine hydrolysis. Inhibited by the product CTP, via allosteric rather than competitive inhibition.</text>
</comment>
<comment type="pathway">
    <text evidence="1">Pyrimidine metabolism; CTP biosynthesis via de novo pathway; CTP from UDP: step 2/2.</text>
</comment>
<comment type="subunit">
    <text evidence="1">Homotetramer.</text>
</comment>
<comment type="miscellaneous">
    <text evidence="1">CTPSs have evolved a hybrid strategy for distinguishing between UTP and CTP. The overlapping regions of the product feedback inhibitory and substrate sites recognize a common feature in both compounds, the triphosphate moiety. To differentiate isosteric substrate and product pyrimidine rings, an additional pocket far from the expected kinase/ligase catalytic site, specifically recognizes the cytosine and ribose portions of the product inhibitor.</text>
</comment>
<comment type="similarity">
    <text evidence="1">Belongs to the CTP synthase family.</text>
</comment>
<protein>
    <recommendedName>
        <fullName evidence="1">CTP synthase</fullName>
        <ecNumber evidence="1">6.3.4.2</ecNumber>
    </recommendedName>
    <alternativeName>
        <fullName evidence="1">Cytidine 5'-triphosphate synthase</fullName>
    </alternativeName>
    <alternativeName>
        <fullName evidence="1">Cytidine triphosphate synthetase</fullName>
        <shortName evidence="1">CTP synthetase</shortName>
        <shortName evidence="1">CTPS</shortName>
    </alternativeName>
    <alternativeName>
        <fullName evidence="1">UTP--ammonia ligase</fullName>
    </alternativeName>
</protein>
<reference key="1">
    <citation type="journal article" date="2006" name="J. Bacteriol.">
        <title>Genome sequence of Aeromonas hydrophila ATCC 7966T: jack of all trades.</title>
        <authorList>
            <person name="Seshadri R."/>
            <person name="Joseph S.W."/>
            <person name="Chopra A.K."/>
            <person name="Sha J."/>
            <person name="Shaw J."/>
            <person name="Graf J."/>
            <person name="Haft D.H."/>
            <person name="Wu M."/>
            <person name="Ren Q."/>
            <person name="Rosovitz M.J."/>
            <person name="Madupu R."/>
            <person name="Tallon L."/>
            <person name="Kim M."/>
            <person name="Jin S."/>
            <person name="Vuong H."/>
            <person name="Stine O.C."/>
            <person name="Ali A."/>
            <person name="Horneman A.J."/>
            <person name="Heidelberg J.F."/>
        </authorList>
    </citation>
    <scope>NUCLEOTIDE SEQUENCE [LARGE SCALE GENOMIC DNA]</scope>
    <source>
        <strain>ATCC 7966 / DSM 30187 / BCRC 13018 / CCUG 14551 / JCM 1027 / KCTC 2358 / NCIMB 9240 / NCTC 8049</strain>
    </source>
</reference>
<sequence>MTTKYIFVTGGVVSSLGKGIAAASLAAILEARGLDVTIMKLDPYINVDPGTMSPTQHGEVFVTEDGAETDLDLGHYERFIRTKMTRRNNFTTGRIYADVLRKERRGDYLGATIQVIPHITNAIKERVIAGAEGHQVAIVEVGGTVGDIESLPFLEAIRQLAAEVGRNNAMFMHLTLVPYLAAAGEVKTKPTQHSVKELLSIGIQPDVLICRSDRAIPAVERAKIALFCNVPERAVISMKDVDSIYKIPALLKSQNLDSYFTERFGLECKEADLAEWEQVIYEEANPTAEVTIGMVGKYVSLPDAYKSVNEALKHGGLKTRLSVNIKYIDSQDIETRGAELLEGLDAILVPGGFGERGVEGKIQAAQYARENKIPYLGICLGMQVAMIEFARNVAGMEGAHSSEFKKDCAYPVVGLITEWVDDEGNIETRTEKSDLGGTMRLGSQLCHLVEGSKVRQMYGSPTIYERHRHRYEVNNKLLPQIEAAGLKVTGLSADKKLVEIIEIPDHPWFVAAQFHPEFTSTPRDGHALFAGFVKAAGEYQKRNLK</sequence>
<feature type="chain" id="PRO_1000139370" description="CTP synthase">
    <location>
        <begin position="1"/>
        <end position="545"/>
    </location>
</feature>
<feature type="domain" description="Glutamine amidotransferase type-1" evidence="1">
    <location>
        <begin position="291"/>
        <end position="542"/>
    </location>
</feature>
<feature type="region of interest" description="Amidoligase domain" evidence="1">
    <location>
        <begin position="1"/>
        <end position="266"/>
    </location>
</feature>
<feature type="active site" description="Nucleophile; for glutamine hydrolysis" evidence="1">
    <location>
        <position position="379"/>
    </location>
</feature>
<feature type="active site" evidence="1">
    <location>
        <position position="515"/>
    </location>
</feature>
<feature type="active site" evidence="1">
    <location>
        <position position="517"/>
    </location>
</feature>
<feature type="binding site" evidence="1">
    <location>
        <position position="14"/>
    </location>
    <ligand>
        <name>CTP</name>
        <dbReference type="ChEBI" id="CHEBI:37563"/>
        <note>allosteric inhibitor</note>
    </ligand>
</feature>
<feature type="binding site" evidence="1">
    <location>
        <position position="14"/>
    </location>
    <ligand>
        <name>UTP</name>
        <dbReference type="ChEBI" id="CHEBI:46398"/>
    </ligand>
</feature>
<feature type="binding site" evidence="1">
    <location>
        <begin position="15"/>
        <end position="20"/>
    </location>
    <ligand>
        <name>ATP</name>
        <dbReference type="ChEBI" id="CHEBI:30616"/>
    </ligand>
</feature>
<feature type="binding site" evidence="1">
    <location>
        <position position="72"/>
    </location>
    <ligand>
        <name>ATP</name>
        <dbReference type="ChEBI" id="CHEBI:30616"/>
    </ligand>
</feature>
<feature type="binding site" evidence="1">
    <location>
        <position position="72"/>
    </location>
    <ligand>
        <name>Mg(2+)</name>
        <dbReference type="ChEBI" id="CHEBI:18420"/>
    </ligand>
</feature>
<feature type="binding site" evidence="1">
    <location>
        <position position="140"/>
    </location>
    <ligand>
        <name>Mg(2+)</name>
        <dbReference type="ChEBI" id="CHEBI:18420"/>
    </ligand>
</feature>
<feature type="binding site" evidence="1">
    <location>
        <begin position="147"/>
        <end position="149"/>
    </location>
    <ligand>
        <name>CTP</name>
        <dbReference type="ChEBI" id="CHEBI:37563"/>
        <note>allosteric inhibitor</note>
    </ligand>
</feature>
<feature type="binding site" evidence="1">
    <location>
        <begin position="187"/>
        <end position="192"/>
    </location>
    <ligand>
        <name>CTP</name>
        <dbReference type="ChEBI" id="CHEBI:37563"/>
        <note>allosteric inhibitor</note>
    </ligand>
</feature>
<feature type="binding site" evidence="1">
    <location>
        <begin position="187"/>
        <end position="192"/>
    </location>
    <ligand>
        <name>UTP</name>
        <dbReference type="ChEBI" id="CHEBI:46398"/>
    </ligand>
</feature>
<feature type="binding site" evidence="1">
    <location>
        <position position="223"/>
    </location>
    <ligand>
        <name>CTP</name>
        <dbReference type="ChEBI" id="CHEBI:37563"/>
        <note>allosteric inhibitor</note>
    </ligand>
</feature>
<feature type="binding site" evidence="1">
    <location>
        <position position="223"/>
    </location>
    <ligand>
        <name>UTP</name>
        <dbReference type="ChEBI" id="CHEBI:46398"/>
    </ligand>
</feature>
<feature type="binding site" evidence="1">
    <location>
        <begin position="239"/>
        <end position="241"/>
    </location>
    <ligand>
        <name>ATP</name>
        <dbReference type="ChEBI" id="CHEBI:30616"/>
    </ligand>
</feature>
<feature type="binding site" evidence="1">
    <location>
        <position position="352"/>
    </location>
    <ligand>
        <name>L-glutamine</name>
        <dbReference type="ChEBI" id="CHEBI:58359"/>
    </ligand>
</feature>
<feature type="binding site" evidence="1">
    <location>
        <begin position="380"/>
        <end position="383"/>
    </location>
    <ligand>
        <name>L-glutamine</name>
        <dbReference type="ChEBI" id="CHEBI:58359"/>
    </ligand>
</feature>
<feature type="binding site" evidence="1">
    <location>
        <position position="403"/>
    </location>
    <ligand>
        <name>L-glutamine</name>
        <dbReference type="ChEBI" id="CHEBI:58359"/>
    </ligand>
</feature>
<feature type="binding site" evidence="1">
    <location>
        <position position="470"/>
    </location>
    <ligand>
        <name>L-glutamine</name>
        <dbReference type="ChEBI" id="CHEBI:58359"/>
    </ligand>
</feature>
<evidence type="ECO:0000255" key="1">
    <source>
        <dbReference type="HAMAP-Rule" id="MF_01227"/>
    </source>
</evidence>
<organism>
    <name type="scientific">Aeromonas hydrophila subsp. hydrophila (strain ATCC 7966 / DSM 30187 / BCRC 13018 / CCUG 14551 / JCM 1027 / KCTC 2358 / NCIMB 9240 / NCTC 8049)</name>
    <dbReference type="NCBI Taxonomy" id="380703"/>
    <lineage>
        <taxon>Bacteria</taxon>
        <taxon>Pseudomonadati</taxon>
        <taxon>Pseudomonadota</taxon>
        <taxon>Gammaproteobacteria</taxon>
        <taxon>Aeromonadales</taxon>
        <taxon>Aeromonadaceae</taxon>
        <taxon>Aeromonas</taxon>
    </lineage>
</organism>
<gene>
    <name evidence="1" type="primary">pyrG</name>
    <name type="ordered locus">AHA_0820</name>
</gene>
<accession>A0KGH2</accession>